<sequence>MRTAYHEQLSELSERLSEMCGLAGIAMERATQALLQADLMLAEQVITDHEKIATRSARAEESAFVLLALQAPVAGDLRAIVSAIQMVAAIDRMGALALHVAKTARRRHPQHVLPEEVNGYFAEIGRVAVELGNGAQEVVLSRDPEKAAQIREKDDAMDELHRHLFSVLMDREWKHGVAAAVDVTLLGRFYERFADHAVEVARRVIFQATGSFPEDDTVPGSR</sequence>
<feature type="chain" id="PRO_0000155170" description="Phosphate-specific transport system accessory protein PhoU homolog 1">
    <location>
        <begin position="1"/>
        <end position="222"/>
    </location>
</feature>
<accession>Q50047</accession>
<evidence type="ECO:0000250" key="1"/>
<evidence type="ECO:0000305" key="2"/>
<keyword id="KW-0963">Cytoplasm</keyword>
<keyword id="KW-0592">Phosphate transport</keyword>
<keyword id="KW-1185">Reference proteome</keyword>
<keyword id="KW-0813">Transport</keyword>
<gene>
    <name type="primary">phoU1</name>
    <name type="synonym">phoY</name>
    <name type="synonym">phoY1</name>
    <name type="ordered locus">ML2188</name>
</gene>
<protein>
    <recommendedName>
        <fullName>Phosphate-specific transport system accessory protein PhoU homolog 1</fullName>
        <shortName>Pst system accessory protein PhoU homolog 1</shortName>
    </recommendedName>
</protein>
<name>PHOU1_MYCLE</name>
<dbReference type="EMBL" id="U15182">
    <property type="protein sequence ID" value="AAA62992.1"/>
    <property type="molecule type" value="Genomic_DNA"/>
</dbReference>
<dbReference type="EMBL" id="AL583924">
    <property type="protein sequence ID" value="CAC31143.1"/>
    <property type="molecule type" value="Genomic_DNA"/>
</dbReference>
<dbReference type="PIR" id="G87182">
    <property type="entry name" value="G87182"/>
</dbReference>
<dbReference type="RefSeq" id="NP_302433.1">
    <property type="nucleotide sequence ID" value="NC_002677.1"/>
</dbReference>
<dbReference type="SMR" id="Q50047"/>
<dbReference type="STRING" id="272631.gene:17576045"/>
<dbReference type="KEGG" id="mle:ML2188"/>
<dbReference type="PATRIC" id="fig|272631.5.peg.4150"/>
<dbReference type="Leproma" id="ML2188"/>
<dbReference type="eggNOG" id="COG0704">
    <property type="taxonomic scope" value="Bacteria"/>
</dbReference>
<dbReference type="HOGENOM" id="CLU_078518_1_0_11"/>
<dbReference type="OrthoDB" id="9814256at2"/>
<dbReference type="Proteomes" id="UP000000806">
    <property type="component" value="Chromosome"/>
</dbReference>
<dbReference type="GO" id="GO:0005737">
    <property type="term" value="C:cytoplasm"/>
    <property type="evidence" value="ECO:0000250"/>
    <property type="project" value="UniProtKB"/>
</dbReference>
<dbReference type="GO" id="GO:0042803">
    <property type="term" value="F:protein homodimerization activity"/>
    <property type="evidence" value="ECO:0000250"/>
    <property type="project" value="UniProtKB"/>
</dbReference>
<dbReference type="GO" id="GO:0030643">
    <property type="term" value="P:intracellular phosphate ion homeostasis"/>
    <property type="evidence" value="ECO:0007669"/>
    <property type="project" value="InterPro"/>
</dbReference>
<dbReference type="GO" id="GO:0045936">
    <property type="term" value="P:negative regulation of phosphate metabolic process"/>
    <property type="evidence" value="ECO:0000250"/>
    <property type="project" value="UniProtKB"/>
</dbReference>
<dbReference type="GO" id="GO:2000186">
    <property type="term" value="P:negative regulation of phosphate transmembrane transport"/>
    <property type="evidence" value="ECO:0000250"/>
    <property type="project" value="UniProtKB"/>
</dbReference>
<dbReference type="GO" id="GO:0006817">
    <property type="term" value="P:phosphate ion transport"/>
    <property type="evidence" value="ECO:0007669"/>
    <property type="project" value="UniProtKB-KW"/>
</dbReference>
<dbReference type="FunFam" id="1.20.58.220:FF:000004">
    <property type="entry name" value="Phosphate-specific transport system accessory protein PhoU"/>
    <property type="match status" value="1"/>
</dbReference>
<dbReference type="Gene3D" id="1.20.58.220">
    <property type="entry name" value="Phosphate transport system protein phou homolog 2, domain 2"/>
    <property type="match status" value="1"/>
</dbReference>
<dbReference type="InterPro" id="IPR028366">
    <property type="entry name" value="P_transport_PhoU"/>
</dbReference>
<dbReference type="InterPro" id="IPR038078">
    <property type="entry name" value="PhoU-like_sf"/>
</dbReference>
<dbReference type="InterPro" id="IPR026022">
    <property type="entry name" value="PhoU_dom"/>
</dbReference>
<dbReference type="NCBIfam" id="TIGR02135">
    <property type="entry name" value="phoU_full"/>
    <property type="match status" value="1"/>
</dbReference>
<dbReference type="PANTHER" id="PTHR42930">
    <property type="entry name" value="PHOSPHATE-SPECIFIC TRANSPORT SYSTEM ACCESSORY PROTEIN PHOU"/>
    <property type="match status" value="1"/>
</dbReference>
<dbReference type="PANTHER" id="PTHR42930:SF3">
    <property type="entry name" value="PHOSPHATE-SPECIFIC TRANSPORT SYSTEM ACCESSORY PROTEIN PHOU"/>
    <property type="match status" value="1"/>
</dbReference>
<dbReference type="Pfam" id="PF01895">
    <property type="entry name" value="PhoU"/>
    <property type="match status" value="2"/>
</dbReference>
<dbReference type="PIRSF" id="PIRSF003107">
    <property type="entry name" value="PhoU"/>
    <property type="match status" value="1"/>
</dbReference>
<dbReference type="SUPFAM" id="SSF109755">
    <property type="entry name" value="PhoU-like"/>
    <property type="match status" value="1"/>
</dbReference>
<organism>
    <name type="scientific">Mycobacterium leprae (strain TN)</name>
    <dbReference type="NCBI Taxonomy" id="272631"/>
    <lineage>
        <taxon>Bacteria</taxon>
        <taxon>Bacillati</taxon>
        <taxon>Actinomycetota</taxon>
        <taxon>Actinomycetes</taxon>
        <taxon>Mycobacteriales</taxon>
        <taxon>Mycobacteriaceae</taxon>
        <taxon>Mycobacterium</taxon>
    </lineage>
</organism>
<comment type="function">
    <text evidence="1">Plays a role in the regulation of phosphate uptake.</text>
</comment>
<comment type="subunit">
    <text evidence="1">Homodimer.</text>
</comment>
<comment type="subcellular location">
    <subcellularLocation>
        <location evidence="1">Cytoplasm</location>
    </subcellularLocation>
</comment>
<comment type="similarity">
    <text evidence="2">Belongs to the PhoU family.</text>
</comment>
<reference key="1">
    <citation type="submission" date="1994-09" db="EMBL/GenBank/DDBJ databases">
        <authorList>
            <person name="Smith D.R."/>
            <person name="Robison K."/>
        </authorList>
    </citation>
    <scope>NUCLEOTIDE SEQUENCE [GENOMIC DNA]</scope>
</reference>
<reference key="2">
    <citation type="journal article" date="2001" name="Nature">
        <title>Massive gene decay in the leprosy bacillus.</title>
        <authorList>
            <person name="Cole S.T."/>
            <person name="Eiglmeier K."/>
            <person name="Parkhill J."/>
            <person name="James K.D."/>
            <person name="Thomson N.R."/>
            <person name="Wheeler P.R."/>
            <person name="Honore N."/>
            <person name="Garnier T."/>
            <person name="Churcher C.M."/>
            <person name="Harris D.E."/>
            <person name="Mungall K.L."/>
            <person name="Basham D."/>
            <person name="Brown D."/>
            <person name="Chillingworth T."/>
            <person name="Connor R."/>
            <person name="Davies R.M."/>
            <person name="Devlin K."/>
            <person name="Duthoy S."/>
            <person name="Feltwell T."/>
            <person name="Fraser A."/>
            <person name="Hamlin N."/>
            <person name="Holroyd S."/>
            <person name="Hornsby T."/>
            <person name="Jagels K."/>
            <person name="Lacroix C."/>
            <person name="Maclean J."/>
            <person name="Moule S."/>
            <person name="Murphy L.D."/>
            <person name="Oliver K."/>
            <person name="Quail M.A."/>
            <person name="Rajandream M.A."/>
            <person name="Rutherford K.M."/>
            <person name="Rutter S."/>
            <person name="Seeger K."/>
            <person name="Simon S."/>
            <person name="Simmonds M."/>
            <person name="Skelton J."/>
            <person name="Squares R."/>
            <person name="Squares S."/>
            <person name="Stevens K."/>
            <person name="Taylor K."/>
            <person name="Whitehead S."/>
            <person name="Woodward J.R."/>
            <person name="Barrell B.G."/>
        </authorList>
    </citation>
    <scope>NUCLEOTIDE SEQUENCE [LARGE SCALE GENOMIC DNA]</scope>
    <source>
        <strain>TN</strain>
    </source>
</reference>
<proteinExistence type="inferred from homology"/>